<gene>
    <name type="ORF">ORF3</name>
</gene>
<reference key="1">
    <citation type="journal article" date="1988" name="Nucleic Acids Res.">
        <title>Nucleotide sequence of beet western yellows virus RNA.</title>
        <authorList>
            <person name="Veidt I."/>
            <person name="Lot H."/>
            <person name="Leiser M."/>
            <person name="Scheidecker D."/>
            <person name="Guilley H."/>
            <person name="Richards K.E."/>
            <person name="Jonard G."/>
        </authorList>
    </citation>
    <scope>NUCLEOTIDE SEQUENCE [GENOMIC RNA]</scope>
</reference>
<organismHost>
    <name type="scientific">Beta vulgaris</name>
    <name type="common">Sugar beet</name>
    <dbReference type="NCBI Taxonomy" id="161934"/>
</organismHost>
<organismHost>
    <name type="scientific">Brassica napus subsp. rapifera</name>
    <dbReference type="NCBI Taxonomy" id="3709"/>
</organismHost>
<organismHost>
    <name type="scientific">Brassica napus var. napus</name>
    <dbReference type="NCBI Taxonomy" id="138011"/>
</organismHost>
<organismHost>
    <name type="scientific">Brassica nigra</name>
    <name type="common">Black mustard</name>
    <name type="synonym">Sinapis nigra</name>
    <dbReference type="NCBI Taxonomy" id="3710"/>
</organismHost>
<organismHost>
    <name type="scientific">Brassica oleracea var. botrytis</name>
    <name type="common">Cauliflower</name>
    <dbReference type="NCBI Taxonomy" id="3715"/>
</organismHost>
<organismHost>
    <name type="scientific">Brassica oleracea var. capitata</name>
    <name type="common">Cabbage</name>
    <dbReference type="NCBI Taxonomy" id="3716"/>
</organismHost>
<organismHost>
    <name type="scientific">Brassica rapa subsp. rapa</name>
    <name type="common">Turnip</name>
    <dbReference type="NCBI Taxonomy" id="51350"/>
</organismHost>
<organismHost>
    <name type="scientific">Capsicum annuum</name>
    <name type="common">Capsicum pepper</name>
    <dbReference type="NCBI Taxonomy" id="4072"/>
</organismHost>
<organismHost>
    <name type="scientific">Cicer arietinum</name>
    <name type="common">Chickpea</name>
    <name type="synonym">Garbanzo</name>
    <dbReference type="NCBI Taxonomy" id="3827"/>
</organismHost>
<organismHost>
    <name type="scientific">Citrullus lanatus</name>
    <name type="common">Watermelon</name>
    <name type="synonym">Citrullus vulgaris</name>
    <dbReference type="NCBI Taxonomy" id="3654"/>
</organismHost>
<organismHost>
    <name type="scientific">Crambe hispanica subsp. abyssinica</name>
    <name type="common">Abyssinian kale</name>
    <name type="synonym">Crambe abyssinica</name>
    <dbReference type="NCBI Taxonomy" id="3721"/>
</organismHost>
<organismHost>
    <name type="scientific">Cucumis sativus</name>
    <name type="common">Cucumber</name>
    <dbReference type="NCBI Taxonomy" id="3659"/>
</organismHost>
<organismHost>
    <name type="scientific">Cucurbita pepo</name>
    <name type="common">Vegetable marrow</name>
    <name type="synonym">Summer squash</name>
    <dbReference type="NCBI Taxonomy" id="3663"/>
</organismHost>
<organismHost>
    <name type="scientific">Glycine max</name>
    <name type="common">Soybean</name>
    <name type="synonym">Glycine hispida</name>
    <dbReference type="NCBI Taxonomy" id="3847"/>
</organismHost>
<organismHost>
    <name type="scientific">Helianthus annuus</name>
    <name type="common">Common sunflower</name>
    <dbReference type="NCBI Taxonomy" id="4232"/>
</organismHost>
<organismHost>
    <name type="scientific">Lactuca sativa</name>
    <name type="common">Garden lettuce</name>
    <dbReference type="NCBI Taxonomy" id="4236"/>
</organismHost>
<organismHost>
    <name type="scientific">Phlox drummondii</name>
    <name type="common">Annual phlox</name>
    <dbReference type="NCBI Taxonomy" id="103529"/>
</organismHost>
<organismHost>
    <name type="scientific">Pisum sativum</name>
    <name type="common">Garden pea</name>
    <name type="synonym">Lathyrus oleraceus</name>
    <dbReference type="NCBI Taxonomy" id="3888"/>
</organismHost>
<organismHost>
    <name type="scientific">Raphanus sativus</name>
    <name type="common">Radish</name>
    <name type="synonym">Raphanus raphanistrum var. sativus</name>
    <dbReference type="NCBI Taxonomy" id="3726"/>
</organismHost>
<organismHost>
    <name type="scientific">Solanum lycopersicum</name>
    <name type="common">Tomato</name>
    <name type="synonym">Lycopersicon esculentum</name>
    <dbReference type="NCBI Taxonomy" id="4081"/>
</organismHost>
<organismHost>
    <name type="scientific">Spinacia oleracea</name>
    <name type="common">Spinach</name>
    <dbReference type="NCBI Taxonomy" id="3562"/>
</organismHost>
<organismHost>
    <name type="scientific">Trifolium subterraneum</name>
    <name type="common">Subterranean clover</name>
    <dbReference type="NCBI Taxonomy" id="3900"/>
</organismHost>
<organismHost>
    <name type="scientific">Vicia faba</name>
    <name type="common">Broad bean</name>
    <name type="synonym">Faba vulgaris</name>
    <dbReference type="NCBI Taxonomy" id="3906"/>
</organismHost>
<organism>
    <name type="scientific">Beet western yellows virus (isolate GB1)</name>
    <name type="common">BWYV</name>
    <dbReference type="NCBI Taxonomy" id="12044"/>
    <lineage>
        <taxon>Viruses</taxon>
        <taxon>Riboviria</taxon>
        <taxon>Orthornavirae</taxon>
        <taxon>Pisuviricota</taxon>
        <taxon>Pisoniviricetes</taxon>
        <taxon>Sobelivirales</taxon>
        <taxon>Solemoviridae</taxon>
        <taxon>Polerovirus</taxon>
        <taxon>Beet western yellows virus</taxon>
    </lineage>
</organism>
<proteinExistence type="inferred from homology"/>
<sequence length="201" mass="22340">NTVVGRRTINGRRRPRRQTRRAQRSQPVVVVQTSRATQRRPRRRRRGNNRTRGTVPTRGAGSSETFVFSKDNLAGSSSGRITFGPSLSDCPAFSNGILKAYHEYKISMVILEFVSEASSQNSGSIAYELDPHCKLNSLSSTINKFGITKPGKAAFTASYINGKEWHDVAEDQFRILYKGNGSSSIAGSFRITIKCQFHNPK</sequence>
<feature type="chain" id="PRO_0000222404" description="Major capsid protein">
    <location>
        <begin position="1"/>
        <end position="201"/>
    </location>
</feature>
<feature type="region of interest" description="Disordered" evidence="3">
    <location>
        <begin position="1"/>
        <end position="63"/>
    </location>
</feature>
<feature type="compositionally biased region" description="Basic residues" evidence="3">
    <location>
        <begin position="9"/>
        <end position="23"/>
    </location>
</feature>
<feature type="compositionally biased region" description="Basic residues" evidence="3">
    <location>
        <begin position="37"/>
        <end position="49"/>
    </location>
</feature>
<feature type="compositionally biased region" description="Low complexity" evidence="3">
    <location>
        <begin position="50"/>
        <end position="59"/>
    </location>
</feature>
<feature type="non-terminal residue">
    <location>
        <position position="1"/>
    </location>
</feature>
<comment type="function">
    <text evidence="1">Major capsid protein that self-assembles to form an icosahedral capsid with a T=3 symmetry, about 23 nm in diameter, and consisting of 180 capsid proteins monomers. Most of the 180 monomers are the major capsid protein, but a small percentage contain the minor capsid protein, which has a long C-terminal extension.</text>
</comment>
<comment type="subcellular location">
    <subcellularLocation>
        <location evidence="1">Virion</location>
    </subcellularLocation>
</comment>
<comment type="domain">
    <text evidence="2">The N-terminus like those of many plant virus capsid proteins is highly basic. These regions may be involved in protein-RNA interaction.</text>
</comment>
<comment type="similarity">
    <text evidence="4">Belongs to the luteoviruses capsid protein family.</text>
</comment>
<keyword id="KW-0167">Capsid protein</keyword>
<keyword id="KW-0946">Virion</keyword>
<evidence type="ECO:0000250" key="1">
    <source>
        <dbReference type="UniProtKB" id="P17522"/>
    </source>
</evidence>
<evidence type="ECO:0000250" key="2">
    <source>
        <dbReference type="UniProtKB" id="P17525"/>
    </source>
</evidence>
<evidence type="ECO:0000256" key="3">
    <source>
        <dbReference type="SAM" id="MobiDB-lite"/>
    </source>
</evidence>
<evidence type="ECO:0000305" key="4"/>
<accession>P09509</accession>
<dbReference type="EMBL" id="X13062">
    <property type="protein sequence ID" value="CAA31459.1"/>
    <property type="molecule type" value="Genomic_RNA"/>
</dbReference>
<dbReference type="PIR" id="S01935">
    <property type="entry name" value="VCVQGB"/>
</dbReference>
<dbReference type="SMR" id="P09509"/>
<dbReference type="GO" id="GO:0019028">
    <property type="term" value="C:viral capsid"/>
    <property type="evidence" value="ECO:0007669"/>
    <property type="project" value="UniProtKB-KW"/>
</dbReference>
<dbReference type="GO" id="GO:0005198">
    <property type="term" value="F:structural molecule activity"/>
    <property type="evidence" value="ECO:0007669"/>
    <property type="project" value="InterPro"/>
</dbReference>
<dbReference type="InterPro" id="IPR001517">
    <property type="entry name" value="Luteo_coat"/>
</dbReference>
<dbReference type="Pfam" id="PF00894">
    <property type="entry name" value="Luteo_coat"/>
    <property type="match status" value="1"/>
</dbReference>
<dbReference type="PRINTS" id="PR00915">
    <property type="entry name" value="LUTEOGP1COAT"/>
</dbReference>
<name>CAPSD_BWYVG</name>
<protein>
    <recommendedName>
        <fullName>Major capsid protein</fullName>
    </recommendedName>
    <alternativeName>
        <fullName>Coat protein</fullName>
        <shortName>CP</shortName>
    </alternativeName>
</protein>